<comment type="function">
    <text evidence="1">Catalyzes the reversible isomerization of glucose-6-phosphate to fructose-6-phosphate.</text>
</comment>
<comment type="catalytic activity">
    <reaction evidence="1">
        <text>alpha-D-glucose 6-phosphate = beta-D-fructose 6-phosphate</text>
        <dbReference type="Rhea" id="RHEA:11816"/>
        <dbReference type="ChEBI" id="CHEBI:57634"/>
        <dbReference type="ChEBI" id="CHEBI:58225"/>
        <dbReference type="EC" id="5.3.1.9"/>
    </reaction>
</comment>
<comment type="pathway">
    <text evidence="1">Carbohydrate biosynthesis; gluconeogenesis.</text>
</comment>
<comment type="pathway">
    <text evidence="1">Carbohydrate degradation; glycolysis; D-glyceraldehyde 3-phosphate and glycerone phosphate from D-glucose: step 2/4.</text>
</comment>
<comment type="subcellular location">
    <subcellularLocation>
        <location evidence="1">Cytoplasm</location>
    </subcellularLocation>
</comment>
<comment type="similarity">
    <text evidence="1">Belongs to the GPI family.</text>
</comment>
<keyword id="KW-0963">Cytoplasm</keyword>
<keyword id="KW-0312">Gluconeogenesis</keyword>
<keyword id="KW-0324">Glycolysis</keyword>
<keyword id="KW-0413">Isomerase</keyword>
<name>G6PI_SHEB9</name>
<gene>
    <name evidence="1" type="primary">pgi</name>
    <name type="ordered locus">Sbal195_1144</name>
</gene>
<feature type="chain" id="PRO_1000081248" description="Glucose-6-phosphate isomerase">
    <location>
        <begin position="1"/>
        <end position="545"/>
    </location>
</feature>
<feature type="active site" description="Proton donor" evidence="1">
    <location>
        <position position="351"/>
    </location>
</feature>
<feature type="active site" evidence="1">
    <location>
        <position position="382"/>
    </location>
</feature>
<feature type="active site" evidence="1">
    <location>
        <position position="510"/>
    </location>
</feature>
<sequence length="545" mass="59565">MTLLTQSSTWQALSAHSKNVPHMRELFATDAARFNKMSLSACGLLLDYSKNRATAETLDLLFTLASNSQLEAKIKAMFAGEIINTTEKRAVLHTALRSTAEQSIIAEGQDIVPEVQQTLNKMQGFVSSVTSGQWKGYTGKAITDIVSIGIGGSFLGPKIVSQALRPYWNPELKCHFVANVDGTSISEKLKLLDPETTLFIMSSKSFGTQETLTNTLTAREWFLAKGGLQSDVAKHFVAVTSNVAKATDFGIDADNIFPMWDWVGGRYSLWSAIGLPIALLIGMDNFRALLSGAHQMDEHFANAPLTENMPVIMGLLSLWYGNFFNAQSHVVLTYDHYLRGLPAYFQQLDMESNGKSVTLNGTDVDYSTGPVIWGGEGTNGQHAYHQLLHQGTALIPADFIMPLQSHNPIGEHHDQLASNCFGQTQALMQGRTFDEALAELANSALPAAEKQLIAKHKVMPGNKPSNTLLMDKLTPSTLGALIALYEHRTFVQGAIWDINSFDQWGVELGKDLGNDVLTRIGASQDCDALDASSNALINLYRHGKI</sequence>
<accession>A9L4T5</accession>
<organism>
    <name type="scientific">Shewanella baltica (strain OS195)</name>
    <dbReference type="NCBI Taxonomy" id="399599"/>
    <lineage>
        <taxon>Bacteria</taxon>
        <taxon>Pseudomonadati</taxon>
        <taxon>Pseudomonadota</taxon>
        <taxon>Gammaproteobacteria</taxon>
        <taxon>Alteromonadales</taxon>
        <taxon>Shewanellaceae</taxon>
        <taxon>Shewanella</taxon>
    </lineage>
</organism>
<reference key="1">
    <citation type="submission" date="2007-11" db="EMBL/GenBank/DDBJ databases">
        <title>Complete sequence of chromosome of Shewanella baltica OS195.</title>
        <authorList>
            <consortium name="US DOE Joint Genome Institute"/>
            <person name="Copeland A."/>
            <person name="Lucas S."/>
            <person name="Lapidus A."/>
            <person name="Barry K."/>
            <person name="Glavina del Rio T."/>
            <person name="Dalin E."/>
            <person name="Tice H."/>
            <person name="Pitluck S."/>
            <person name="Chain P."/>
            <person name="Malfatti S."/>
            <person name="Shin M."/>
            <person name="Vergez L."/>
            <person name="Schmutz J."/>
            <person name="Larimer F."/>
            <person name="Land M."/>
            <person name="Hauser L."/>
            <person name="Kyrpides N."/>
            <person name="Kim E."/>
            <person name="Brettar I."/>
            <person name="Rodrigues J."/>
            <person name="Konstantinidis K."/>
            <person name="Klappenbach J."/>
            <person name="Hofle M."/>
            <person name="Tiedje J."/>
            <person name="Richardson P."/>
        </authorList>
    </citation>
    <scope>NUCLEOTIDE SEQUENCE [LARGE SCALE GENOMIC DNA]</scope>
    <source>
        <strain>OS195</strain>
    </source>
</reference>
<evidence type="ECO:0000255" key="1">
    <source>
        <dbReference type="HAMAP-Rule" id="MF_00473"/>
    </source>
</evidence>
<proteinExistence type="inferred from homology"/>
<dbReference type="EC" id="5.3.1.9" evidence="1"/>
<dbReference type="EMBL" id="CP000891">
    <property type="protein sequence ID" value="ABX48320.1"/>
    <property type="molecule type" value="Genomic_DNA"/>
</dbReference>
<dbReference type="RefSeq" id="WP_006084968.1">
    <property type="nucleotide sequence ID" value="NC_009997.1"/>
</dbReference>
<dbReference type="SMR" id="A9L4T5"/>
<dbReference type="GeneID" id="11774629"/>
<dbReference type="KEGG" id="sbn:Sbal195_1144"/>
<dbReference type="HOGENOM" id="CLU_017947_3_1_6"/>
<dbReference type="UniPathway" id="UPA00109">
    <property type="reaction ID" value="UER00181"/>
</dbReference>
<dbReference type="UniPathway" id="UPA00138"/>
<dbReference type="Proteomes" id="UP000000770">
    <property type="component" value="Chromosome"/>
</dbReference>
<dbReference type="GO" id="GO:0005829">
    <property type="term" value="C:cytosol"/>
    <property type="evidence" value="ECO:0007669"/>
    <property type="project" value="TreeGrafter"/>
</dbReference>
<dbReference type="GO" id="GO:0097367">
    <property type="term" value="F:carbohydrate derivative binding"/>
    <property type="evidence" value="ECO:0007669"/>
    <property type="project" value="InterPro"/>
</dbReference>
<dbReference type="GO" id="GO:0004347">
    <property type="term" value="F:glucose-6-phosphate isomerase activity"/>
    <property type="evidence" value="ECO:0007669"/>
    <property type="project" value="UniProtKB-UniRule"/>
</dbReference>
<dbReference type="GO" id="GO:0048029">
    <property type="term" value="F:monosaccharide binding"/>
    <property type="evidence" value="ECO:0007669"/>
    <property type="project" value="TreeGrafter"/>
</dbReference>
<dbReference type="GO" id="GO:0006094">
    <property type="term" value="P:gluconeogenesis"/>
    <property type="evidence" value="ECO:0007669"/>
    <property type="project" value="UniProtKB-UniRule"/>
</dbReference>
<dbReference type="GO" id="GO:0051156">
    <property type="term" value="P:glucose 6-phosphate metabolic process"/>
    <property type="evidence" value="ECO:0007669"/>
    <property type="project" value="TreeGrafter"/>
</dbReference>
<dbReference type="GO" id="GO:0006096">
    <property type="term" value="P:glycolytic process"/>
    <property type="evidence" value="ECO:0007669"/>
    <property type="project" value="UniProtKB-UniRule"/>
</dbReference>
<dbReference type="CDD" id="cd05015">
    <property type="entry name" value="SIS_PGI_1"/>
    <property type="match status" value="1"/>
</dbReference>
<dbReference type="CDD" id="cd05016">
    <property type="entry name" value="SIS_PGI_2"/>
    <property type="match status" value="1"/>
</dbReference>
<dbReference type="FunFam" id="3.40.50.10490:FF:000018">
    <property type="entry name" value="Glucose-6-phosphate isomerase"/>
    <property type="match status" value="1"/>
</dbReference>
<dbReference type="Gene3D" id="1.10.1390.10">
    <property type="match status" value="1"/>
</dbReference>
<dbReference type="Gene3D" id="3.40.50.10490">
    <property type="entry name" value="Glucose-6-phosphate isomerase like protein, domain 1"/>
    <property type="match status" value="2"/>
</dbReference>
<dbReference type="HAMAP" id="MF_00473">
    <property type="entry name" value="G6P_isomerase"/>
    <property type="match status" value="1"/>
</dbReference>
<dbReference type="InterPro" id="IPR001672">
    <property type="entry name" value="G6P_Isomerase"/>
</dbReference>
<dbReference type="InterPro" id="IPR023096">
    <property type="entry name" value="G6P_Isomerase_C"/>
</dbReference>
<dbReference type="InterPro" id="IPR018189">
    <property type="entry name" value="Phosphoglucose_isomerase_CS"/>
</dbReference>
<dbReference type="InterPro" id="IPR046348">
    <property type="entry name" value="SIS_dom_sf"/>
</dbReference>
<dbReference type="InterPro" id="IPR035476">
    <property type="entry name" value="SIS_PGI_1"/>
</dbReference>
<dbReference type="InterPro" id="IPR035482">
    <property type="entry name" value="SIS_PGI_2"/>
</dbReference>
<dbReference type="NCBIfam" id="NF001211">
    <property type="entry name" value="PRK00179.1"/>
    <property type="match status" value="1"/>
</dbReference>
<dbReference type="PANTHER" id="PTHR11469">
    <property type="entry name" value="GLUCOSE-6-PHOSPHATE ISOMERASE"/>
    <property type="match status" value="1"/>
</dbReference>
<dbReference type="PANTHER" id="PTHR11469:SF1">
    <property type="entry name" value="GLUCOSE-6-PHOSPHATE ISOMERASE"/>
    <property type="match status" value="1"/>
</dbReference>
<dbReference type="Pfam" id="PF00342">
    <property type="entry name" value="PGI"/>
    <property type="match status" value="1"/>
</dbReference>
<dbReference type="PRINTS" id="PR00662">
    <property type="entry name" value="G6PISOMERASE"/>
</dbReference>
<dbReference type="SUPFAM" id="SSF53697">
    <property type="entry name" value="SIS domain"/>
    <property type="match status" value="1"/>
</dbReference>
<dbReference type="PROSITE" id="PS00765">
    <property type="entry name" value="P_GLUCOSE_ISOMERASE_1"/>
    <property type="match status" value="1"/>
</dbReference>
<dbReference type="PROSITE" id="PS00174">
    <property type="entry name" value="P_GLUCOSE_ISOMERASE_2"/>
    <property type="match status" value="1"/>
</dbReference>
<dbReference type="PROSITE" id="PS51463">
    <property type="entry name" value="P_GLUCOSE_ISOMERASE_3"/>
    <property type="match status" value="1"/>
</dbReference>
<protein>
    <recommendedName>
        <fullName evidence="1">Glucose-6-phosphate isomerase</fullName>
        <shortName evidence="1">GPI</shortName>
        <ecNumber evidence="1">5.3.1.9</ecNumber>
    </recommendedName>
    <alternativeName>
        <fullName evidence="1">Phosphoglucose isomerase</fullName>
        <shortName evidence="1">PGI</shortName>
    </alternativeName>
    <alternativeName>
        <fullName evidence="1">Phosphohexose isomerase</fullName>
        <shortName evidence="1">PHI</shortName>
    </alternativeName>
</protein>